<organism>
    <name type="scientific">Nostoc sp. (strain PCC 7120 / SAG 25.82 / UTEX 2576)</name>
    <dbReference type="NCBI Taxonomy" id="103690"/>
    <lineage>
        <taxon>Bacteria</taxon>
        <taxon>Bacillati</taxon>
        <taxon>Cyanobacteriota</taxon>
        <taxon>Cyanophyceae</taxon>
        <taxon>Nostocales</taxon>
        <taxon>Nostocaceae</taxon>
        <taxon>Nostoc</taxon>
    </lineage>
</organism>
<dbReference type="EC" id="7.1.1.-" evidence="1"/>
<dbReference type="EMBL" id="AJ242867">
    <property type="protein sequence ID" value="CAB44671.1"/>
    <property type="molecule type" value="Genomic_DNA"/>
</dbReference>
<dbReference type="EMBL" id="BA000019">
    <property type="protein sequence ID" value="BAB77750.1"/>
    <property type="molecule type" value="Genomic_DNA"/>
</dbReference>
<dbReference type="PIR" id="AB1835">
    <property type="entry name" value="AB1835"/>
</dbReference>
<dbReference type="SMR" id="Q9WWM4"/>
<dbReference type="STRING" id="103690.gene:10492233"/>
<dbReference type="KEGG" id="ana:alr0226"/>
<dbReference type="eggNOG" id="COG0713">
    <property type="taxonomic scope" value="Bacteria"/>
</dbReference>
<dbReference type="Proteomes" id="UP000002483">
    <property type="component" value="Chromosome"/>
</dbReference>
<dbReference type="GO" id="GO:0030964">
    <property type="term" value="C:NADH dehydrogenase complex"/>
    <property type="evidence" value="ECO:0007669"/>
    <property type="project" value="TreeGrafter"/>
</dbReference>
<dbReference type="GO" id="GO:0031676">
    <property type="term" value="C:plasma membrane-derived thylakoid membrane"/>
    <property type="evidence" value="ECO:0007669"/>
    <property type="project" value="UniProtKB-SubCell"/>
</dbReference>
<dbReference type="GO" id="GO:0016655">
    <property type="term" value="F:oxidoreductase activity, acting on NAD(P)H, quinone or similar compound as acceptor"/>
    <property type="evidence" value="ECO:0007669"/>
    <property type="project" value="UniProtKB-UniRule"/>
</dbReference>
<dbReference type="GO" id="GO:0048038">
    <property type="term" value="F:quinone binding"/>
    <property type="evidence" value="ECO:0007669"/>
    <property type="project" value="UniProtKB-KW"/>
</dbReference>
<dbReference type="GO" id="GO:0042773">
    <property type="term" value="P:ATP synthesis coupled electron transport"/>
    <property type="evidence" value="ECO:0007669"/>
    <property type="project" value="InterPro"/>
</dbReference>
<dbReference type="GO" id="GO:0019684">
    <property type="term" value="P:photosynthesis, light reaction"/>
    <property type="evidence" value="ECO:0007669"/>
    <property type="project" value="UniProtKB-UniRule"/>
</dbReference>
<dbReference type="FunFam" id="1.10.287.3510:FF:000001">
    <property type="entry name" value="NADH-quinone oxidoreductase subunit K"/>
    <property type="match status" value="1"/>
</dbReference>
<dbReference type="Gene3D" id="1.10.287.3510">
    <property type="match status" value="1"/>
</dbReference>
<dbReference type="HAMAP" id="MF_01456">
    <property type="entry name" value="NDH1_NuoK"/>
    <property type="match status" value="1"/>
</dbReference>
<dbReference type="InterPro" id="IPR001133">
    <property type="entry name" value="NADH_UbQ_OxRdtase_chain4L/K"/>
</dbReference>
<dbReference type="InterPro" id="IPR039428">
    <property type="entry name" value="NUOK/Mnh_C1-like"/>
</dbReference>
<dbReference type="NCBIfam" id="NF004320">
    <property type="entry name" value="PRK05715.1-2"/>
    <property type="match status" value="1"/>
</dbReference>
<dbReference type="NCBIfam" id="NF004321">
    <property type="entry name" value="PRK05715.1-3"/>
    <property type="match status" value="1"/>
</dbReference>
<dbReference type="NCBIfam" id="NF004322">
    <property type="entry name" value="PRK05715.1-4"/>
    <property type="match status" value="1"/>
</dbReference>
<dbReference type="NCBIfam" id="NF004323">
    <property type="entry name" value="PRK05715.1-5"/>
    <property type="match status" value="1"/>
</dbReference>
<dbReference type="PANTHER" id="PTHR11434:SF16">
    <property type="entry name" value="NADH-UBIQUINONE OXIDOREDUCTASE CHAIN 4L"/>
    <property type="match status" value="1"/>
</dbReference>
<dbReference type="PANTHER" id="PTHR11434">
    <property type="entry name" value="NADH-UBIQUINONE OXIDOREDUCTASE SUBUNIT ND4L"/>
    <property type="match status" value="1"/>
</dbReference>
<dbReference type="Pfam" id="PF00420">
    <property type="entry name" value="Oxidored_q2"/>
    <property type="match status" value="1"/>
</dbReference>
<accession>Q9WWM4</accession>
<protein>
    <recommendedName>
        <fullName evidence="1">NAD(P)H-quinone oxidoreductase subunit 4L</fullName>
        <ecNumber evidence="1">7.1.1.-</ecNumber>
    </recommendedName>
    <alternativeName>
        <fullName evidence="1">NAD(P)H dehydrogenase subunit 4L</fullName>
    </alternativeName>
    <alternativeName>
        <fullName evidence="1">NADH-plastoquinone oxidoreductase subunit 4L</fullName>
    </alternativeName>
    <alternativeName>
        <fullName evidence="1">NDH-1, subunit 4L</fullName>
    </alternativeName>
    <alternativeName>
        <fullName evidence="1">NDH-E</fullName>
    </alternativeName>
</protein>
<comment type="function">
    <text evidence="1">NDH-1 shuttles electrons from an unknown electron donor, via FMN and iron-sulfur (Fe-S) centers, to quinones in the respiratory and/or the photosynthetic chain. The immediate electron acceptor for the enzyme in this species is believed to be plastoquinone. Couples the redox reaction to proton translocation, and thus conserves the redox energy in a proton gradient. Cyanobacterial NDH-1 also plays a role in inorganic carbon-concentration.</text>
</comment>
<comment type="catalytic activity">
    <reaction evidence="1">
        <text>a plastoquinone + NADH + (n+1) H(+)(in) = a plastoquinol + NAD(+) + n H(+)(out)</text>
        <dbReference type="Rhea" id="RHEA:42608"/>
        <dbReference type="Rhea" id="RHEA-COMP:9561"/>
        <dbReference type="Rhea" id="RHEA-COMP:9562"/>
        <dbReference type="ChEBI" id="CHEBI:15378"/>
        <dbReference type="ChEBI" id="CHEBI:17757"/>
        <dbReference type="ChEBI" id="CHEBI:57540"/>
        <dbReference type="ChEBI" id="CHEBI:57945"/>
        <dbReference type="ChEBI" id="CHEBI:62192"/>
    </reaction>
</comment>
<comment type="catalytic activity">
    <reaction evidence="1">
        <text>a plastoquinone + NADPH + (n+1) H(+)(in) = a plastoquinol + NADP(+) + n H(+)(out)</text>
        <dbReference type="Rhea" id="RHEA:42612"/>
        <dbReference type="Rhea" id="RHEA-COMP:9561"/>
        <dbReference type="Rhea" id="RHEA-COMP:9562"/>
        <dbReference type="ChEBI" id="CHEBI:15378"/>
        <dbReference type="ChEBI" id="CHEBI:17757"/>
        <dbReference type="ChEBI" id="CHEBI:57783"/>
        <dbReference type="ChEBI" id="CHEBI:58349"/>
        <dbReference type="ChEBI" id="CHEBI:62192"/>
    </reaction>
</comment>
<comment type="subunit">
    <text evidence="1">NDH-1 can be composed of about 15 different subunits; different subcomplexes with different compositions have been identified which probably have different functions.</text>
</comment>
<comment type="subcellular location">
    <subcellularLocation>
        <location evidence="1">Cellular thylakoid membrane</location>
        <topology evidence="1">Multi-pass membrane protein</topology>
    </subcellularLocation>
</comment>
<comment type="similarity">
    <text evidence="1">Belongs to the complex I subunit 4L family.</text>
</comment>
<keyword id="KW-0472">Membrane</keyword>
<keyword id="KW-0520">NAD</keyword>
<keyword id="KW-0521">NADP</keyword>
<keyword id="KW-0618">Plastoquinone</keyword>
<keyword id="KW-0874">Quinone</keyword>
<keyword id="KW-1185">Reference proteome</keyword>
<keyword id="KW-0793">Thylakoid</keyword>
<keyword id="KW-1278">Translocase</keyword>
<keyword id="KW-0812">Transmembrane</keyword>
<keyword id="KW-1133">Transmembrane helix</keyword>
<keyword id="KW-0813">Transport</keyword>
<evidence type="ECO:0000255" key="1">
    <source>
        <dbReference type="HAMAP-Rule" id="MF_01456"/>
    </source>
</evidence>
<name>NU4LC_NOSS1</name>
<gene>
    <name evidence="1" type="primary">ndhE</name>
    <name type="ordered locus">alr0226</name>
</gene>
<proteinExistence type="inferred from homology"/>
<feature type="chain" id="PRO_0000118519" description="NAD(P)H-quinone oxidoreductase subunit 4L">
    <location>
        <begin position="1"/>
        <end position="101"/>
    </location>
</feature>
<feature type="transmembrane region" description="Helical" evidence="1">
    <location>
        <begin position="3"/>
        <end position="23"/>
    </location>
</feature>
<feature type="transmembrane region" description="Helical" evidence="1">
    <location>
        <begin position="30"/>
        <end position="50"/>
    </location>
</feature>
<feature type="transmembrane region" description="Helical" evidence="1">
    <location>
        <begin position="64"/>
        <end position="84"/>
    </location>
</feature>
<reference key="1">
    <citation type="submission" date="1999-06" db="EMBL/GenBank/DDBJ databases">
        <title>Isolation of the ndhAIGE gene cluster of Anabaena sp. PCC 7120.</title>
        <authorList>
            <person name="Schiefer W."/>
            <person name="Happe T."/>
        </authorList>
    </citation>
    <scope>NUCLEOTIDE SEQUENCE [GENOMIC DNA]</scope>
</reference>
<reference key="2">
    <citation type="journal article" date="2001" name="DNA Res.">
        <title>Complete genomic sequence of the filamentous nitrogen-fixing cyanobacterium Anabaena sp. strain PCC 7120.</title>
        <authorList>
            <person name="Kaneko T."/>
            <person name="Nakamura Y."/>
            <person name="Wolk C.P."/>
            <person name="Kuritz T."/>
            <person name="Sasamoto S."/>
            <person name="Watanabe A."/>
            <person name="Iriguchi M."/>
            <person name="Ishikawa A."/>
            <person name="Kawashima K."/>
            <person name="Kimura T."/>
            <person name="Kishida Y."/>
            <person name="Kohara M."/>
            <person name="Matsumoto M."/>
            <person name="Matsuno A."/>
            <person name="Muraki A."/>
            <person name="Nakazaki N."/>
            <person name="Shimpo S."/>
            <person name="Sugimoto M."/>
            <person name="Takazawa M."/>
            <person name="Yamada M."/>
            <person name="Yasuda M."/>
            <person name="Tabata S."/>
        </authorList>
    </citation>
    <scope>NUCLEOTIDE SEQUENCE [LARGE SCALE GENOMIC DNA]</scope>
    <source>
        <strain>PCC 7120 / SAG 25.82 / UTEX 2576</strain>
    </source>
</reference>
<sequence length="101" mass="11260">MQLRYFLLLAAALFCIGIYGLITSRNAVRVLMSIELLLNAVNLNLMAFSNYLDSTLIKGQVFTVFVITVAAAEAAVGLAIVLAIYRNRDTVDMEQFNLLKW</sequence>